<proteinExistence type="inferred from homology"/>
<organism>
    <name type="scientific">Lactobacillus gasseri (strain ATCC 33323 / DSM 20243 / BCRC 14619 / CIP 102991 / JCM 1131 / KCTC 3163 / NCIMB 11718 / NCTC 13722 / AM63)</name>
    <dbReference type="NCBI Taxonomy" id="324831"/>
    <lineage>
        <taxon>Bacteria</taxon>
        <taxon>Bacillati</taxon>
        <taxon>Bacillota</taxon>
        <taxon>Bacilli</taxon>
        <taxon>Lactobacillales</taxon>
        <taxon>Lactobacillaceae</taxon>
        <taxon>Lactobacillus</taxon>
    </lineage>
</organism>
<name>FTHS_LACGA</name>
<keyword id="KW-0067">ATP-binding</keyword>
<keyword id="KW-0436">Ligase</keyword>
<keyword id="KW-0547">Nucleotide-binding</keyword>
<keyword id="KW-0554">One-carbon metabolism</keyword>
<accession>Q043I0</accession>
<comment type="catalytic activity">
    <reaction evidence="1">
        <text>(6S)-5,6,7,8-tetrahydrofolate + formate + ATP = (6R)-10-formyltetrahydrofolate + ADP + phosphate</text>
        <dbReference type="Rhea" id="RHEA:20221"/>
        <dbReference type="ChEBI" id="CHEBI:15740"/>
        <dbReference type="ChEBI" id="CHEBI:30616"/>
        <dbReference type="ChEBI" id="CHEBI:43474"/>
        <dbReference type="ChEBI" id="CHEBI:57453"/>
        <dbReference type="ChEBI" id="CHEBI:195366"/>
        <dbReference type="ChEBI" id="CHEBI:456216"/>
        <dbReference type="EC" id="6.3.4.3"/>
    </reaction>
</comment>
<comment type="pathway">
    <text evidence="1">One-carbon metabolism; tetrahydrofolate interconversion.</text>
</comment>
<comment type="similarity">
    <text evidence="1">Belongs to the formate--tetrahydrofolate ligase family.</text>
</comment>
<protein>
    <recommendedName>
        <fullName evidence="1">Formate--tetrahydrofolate ligase</fullName>
        <ecNumber evidence="1">6.3.4.3</ecNumber>
    </recommendedName>
    <alternativeName>
        <fullName evidence="1">Formyltetrahydrofolate synthetase</fullName>
        <shortName evidence="1">FHS</shortName>
        <shortName evidence="1">FTHFS</shortName>
    </alternativeName>
</protein>
<sequence length="559" mass="60837">MNLKSDIEIAQNTKELPIKEIAQKIDLRPEEIELYGNDKAKISWKGINCIKKNQKLGKLILVTSISPTPAGEGKSTITIGLGDAIRNQLHKNTLIALREPSMGPVFGLKGGATGGGYAQIIPMEDINLHFTGDMHALTSAIDTLAALVDNYIYQDNSLELDPNRILLKRGIDVNDRTLRKITIGQGSRFNGIEHEASFAITVANELMAILCLATDINDLKKRIGNILVGFSVKDEPVYVKDLGFEGAIAALLSTALKPNLVQTLEHTPAIVHGGPFANIAHGANSVIATNTALHLSDYVLTEAGFGADLGGQKFMDFVSNHLDKRPDAVVVVATVRALKYQAEESTDHLDEENIPALEKGFANLKRHMENMAHYGVPVIVLINKFASDTDQELNKLKELVQDDGFECEIVSYHDEGSKGGIQAAEKVVELTGKASDFKPVYKPEDSVEDKIAKIAHKIYHAKDIEYSDTAKKQLAEIKKMGKDELPVIIAKTQYSFTDKKKILGAPEDFILHVKDLALKNGAGFIVVATGSILDMPGLPKHPAALDIDVDNNGKISGLF</sequence>
<dbReference type="EC" id="6.3.4.3" evidence="1"/>
<dbReference type="EMBL" id="CP000413">
    <property type="protein sequence ID" value="ABJ60392.1"/>
    <property type="molecule type" value="Genomic_DNA"/>
</dbReference>
<dbReference type="RefSeq" id="WP_003647287.1">
    <property type="nucleotide sequence ID" value="NZ_WBMG01000008.1"/>
</dbReference>
<dbReference type="SMR" id="Q043I0"/>
<dbReference type="GeneID" id="29639325"/>
<dbReference type="KEGG" id="lga:LGAS_1016"/>
<dbReference type="HOGENOM" id="CLU_003601_3_3_9"/>
<dbReference type="UniPathway" id="UPA00193"/>
<dbReference type="Proteomes" id="UP000000664">
    <property type="component" value="Chromosome"/>
</dbReference>
<dbReference type="GO" id="GO:0005524">
    <property type="term" value="F:ATP binding"/>
    <property type="evidence" value="ECO:0007669"/>
    <property type="project" value="UniProtKB-UniRule"/>
</dbReference>
<dbReference type="GO" id="GO:0004329">
    <property type="term" value="F:formate-tetrahydrofolate ligase activity"/>
    <property type="evidence" value="ECO:0007669"/>
    <property type="project" value="UniProtKB-UniRule"/>
</dbReference>
<dbReference type="GO" id="GO:0035999">
    <property type="term" value="P:tetrahydrofolate interconversion"/>
    <property type="evidence" value="ECO:0007669"/>
    <property type="project" value="UniProtKB-UniRule"/>
</dbReference>
<dbReference type="FunFam" id="3.30.1510.10:FF:000001">
    <property type="entry name" value="Formate--tetrahydrofolate ligase"/>
    <property type="match status" value="1"/>
</dbReference>
<dbReference type="Gene3D" id="3.30.1510.10">
    <property type="entry name" value="Domain 2, N(10)-formyltetrahydrofolate synthetase"/>
    <property type="match status" value="1"/>
</dbReference>
<dbReference type="Gene3D" id="3.10.410.10">
    <property type="entry name" value="Formyltetrahydrofolate synthetase, domain 3"/>
    <property type="match status" value="1"/>
</dbReference>
<dbReference type="Gene3D" id="3.40.50.300">
    <property type="entry name" value="P-loop containing nucleotide triphosphate hydrolases"/>
    <property type="match status" value="1"/>
</dbReference>
<dbReference type="HAMAP" id="MF_01543">
    <property type="entry name" value="FTHFS"/>
    <property type="match status" value="1"/>
</dbReference>
<dbReference type="InterPro" id="IPR000559">
    <property type="entry name" value="Formate_THF_ligase"/>
</dbReference>
<dbReference type="InterPro" id="IPR020628">
    <property type="entry name" value="Formate_THF_ligase_CS"/>
</dbReference>
<dbReference type="InterPro" id="IPR027417">
    <property type="entry name" value="P-loop_NTPase"/>
</dbReference>
<dbReference type="NCBIfam" id="NF010030">
    <property type="entry name" value="PRK13505.1"/>
    <property type="match status" value="1"/>
</dbReference>
<dbReference type="Pfam" id="PF01268">
    <property type="entry name" value="FTHFS"/>
    <property type="match status" value="1"/>
</dbReference>
<dbReference type="SUPFAM" id="SSF52540">
    <property type="entry name" value="P-loop containing nucleoside triphosphate hydrolases"/>
    <property type="match status" value="1"/>
</dbReference>
<dbReference type="PROSITE" id="PS00721">
    <property type="entry name" value="FTHFS_1"/>
    <property type="match status" value="1"/>
</dbReference>
<reference key="1">
    <citation type="journal article" date="2006" name="Proc. Natl. Acad. Sci. U.S.A.">
        <title>Comparative genomics of the lactic acid bacteria.</title>
        <authorList>
            <person name="Makarova K.S."/>
            <person name="Slesarev A."/>
            <person name="Wolf Y.I."/>
            <person name="Sorokin A."/>
            <person name="Mirkin B."/>
            <person name="Koonin E.V."/>
            <person name="Pavlov A."/>
            <person name="Pavlova N."/>
            <person name="Karamychev V."/>
            <person name="Polouchine N."/>
            <person name="Shakhova V."/>
            <person name="Grigoriev I."/>
            <person name="Lou Y."/>
            <person name="Rohksar D."/>
            <person name="Lucas S."/>
            <person name="Huang K."/>
            <person name="Goodstein D.M."/>
            <person name="Hawkins T."/>
            <person name="Plengvidhya V."/>
            <person name="Welker D."/>
            <person name="Hughes J."/>
            <person name="Goh Y."/>
            <person name="Benson A."/>
            <person name="Baldwin K."/>
            <person name="Lee J.-H."/>
            <person name="Diaz-Muniz I."/>
            <person name="Dosti B."/>
            <person name="Smeianov V."/>
            <person name="Wechter W."/>
            <person name="Barabote R."/>
            <person name="Lorca G."/>
            <person name="Altermann E."/>
            <person name="Barrangou R."/>
            <person name="Ganesan B."/>
            <person name="Xie Y."/>
            <person name="Rawsthorne H."/>
            <person name="Tamir D."/>
            <person name="Parker C."/>
            <person name="Breidt F."/>
            <person name="Broadbent J.R."/>
            <person name="Hutkins R."/>
            <person name="O'Sullivan D."/>
            <person name="Steele J."/>
            <person name="Unlu G."/>
            <person name="Saier M.H. Jr."/>
            <person name="Klaenhammer T."/>
            <person name="Richardson P."/>
            <person name="Kozyavkin S."/>
            <person name="Weimer B.C."/>
            <person name="Mills D.A."/>
        </authorList>
    </citation>
    <scope>NUCLEOTIDE SEQUENCE [LARGE SCALE GENOMIC DNA]</scope>
    <source>
        <strain>ATCC 33323 / DSM 20243 / BCRC 14619 / CIP 102991 / JCM 1131 / KCTC 3163 / NCIMB 11718 / NCTC 13722 / AM63</strain>
    </source>
</reference>
<feature type="chain" id="PRO_0000293041" description="Formate--tetrahydrofolate ligase">
    <location>
        <begin position="1"/>
        <end position="559"/>
    </location>
</feature>
<feature type="binding site" evidence="1">
    <location>
        <begin position="68"/>
        <end position="75"/>
    </location>
    <ligand>
        <name>ATP</name>
        <dbReference type="ChEBI" id="CHEBI:30616"/>
    </ligand>
</feature>
<gene>
    <name evidence="1" type="primary">fhs</name>
    <name type="ordered locus">LGAS_1016</name>
</gene>
<evidence type="ECO:0000255" key="1">
    <source>
        <dbReference type="HAMAP-Rule" id="MF_01543"/>
    </source>
</evidence>